<organism>
    <name type="scientific">Homo sapiens</name>
    <name type="common">Human</name>
    <dbReference type="NCBI Taxonomy" id="9606"/>
    <lineage>
        <taxon>Eukaryota</taxon>
        <taxon>Metazoa</taxon>
        <taxon>Chordata</taxon>
        <taxon>Craniata</taxon>
        <taxon>Vertebrata</taxon>
        <taxon>Euteleostomi</taxon>
        <taxon>Mammalia</taxon>
        <taxon>Eutheria</taxon>
        <taxon>Euarchontoglires</taxon>
        <taxon>Primates</taxon>
        <taxon>Haplorrhini</taxon>
        <taxon>Catarrhini</taxon>
        <taxon>Hominidae</taxon>
        <taxon>Homo</taxon>
    </lineage>
</organism>
<sequence length="174" mass="19741">MLRTESCRPRSPAGQVAAASPLLLLLLLLAWCAGACRGAPILPQGLQPEQQLQLWNEIDDTCSSFLSIDSQPQASNALEELCFMIMGMLPKPQEQDEKDNTKRFLFHYSKTQKLGKSNVVSSVVHPLLQLVPHLHERRMKRFRVDEEFQSPFASQSRGYFLFRPRNGRRSAGFI</sequence>
<reference key="1">
    <citation type="journal article" date="1995" name="J. Mol. Endocrinol.">
        <title>Cloning and characterization of the cDNA encoding the human neuromedin U (NmU) precursor: NmU expression in the human gastrointestinal tract.</title>
        <authorList>
            <person name="Austin C."/>
            <person name="Lo G."/>
            <person name="Nandha K.A."/>
            <person name="Meleagros L."/>
            <person name="Bloom S.R."/>
        </authorList>
    </citation>
    <scope>NUCLEOTIDE SEQUENCE [MRNA]</scope>
    <source>
        <tissue>Pituitary</tissue>
    </source>
</reference>
<reference key="2">
    <citation type="journal article" date="2004" name="Genome Res.">
        <title>The status, quality, and expansion of the NIH full-length cDNA project: the Mammalian Gene Collection (MGC).</title>
        <authorList>
            <consortium name="The MGC Project Team"/>
        </authorList>
    </citation>
    <scope>NUCLEOTIDE SEQUENCE [LARGE SCALE MRNA]</scope>
    <source>
        <tissue>Ovary</tissue>
    </source>
</reference>
<evidence type="ECO:0000250" key="1"/>
<evidence type="ECO:0000250" key="2">
    <source>
        <dbReference type="UniProtKB" id="P12760"/>
    </source>
</evidence>
<evidence type="ECO:0000255" key="3"/>
<evidence type="ECO:0000305" key="4"/>
<evidence type="ECO:0007829" key="5">
    <source>
        <dbReference type="PDB" id="7XK8"/>
    </source>
</evidence>
<keyword id="KW-0002">3D-structure</keyword>
<keyword id="KW-0027">Amidation</keyword>
<keyword id="KW-0165">Cleavage on pair of basic residues</keyword>
<keyword id="KW-0527">Neuropeptide</keyword>
<keyword id="KW-0558">Oxidation</keyword>
<keyword id="KW-1267">Proteomics identification</keyword>
<keyword id="KW-1185">Reference proteome</keyword>
<keyword id="KW-0964">Secreted</keyword>
<keyword id="KW-0732">Signal</keyword>
<dbReference type="EMBL" id="X76029">
    <property type="protein sequence ID" value="CAA53619.1"/>
    <property type="molecule type" value="mRNA"/>
</dbReference>
<dbReference type="EMBL" id="BC012908">
    <property type="protein sequence ID" value="AAH12908.1"/>
    <property type="molecule type" value="mRNA"/>
</dbReference>
<dbReference type="CCDS" id="CCDS3501.1"/>
<dbReference type="PIR" id="I38063">
    <property type="entry name" value="I38063"/>
</dbReference>
<dbReference type="RefSeq" id="NP_001278974.1">
    <property type="nucleotide sequence ID" value="NM_001292045.1"/>
</dbReference>
<dbReference type="RefSeq" id="NP_001278975.1">
    <property type="nucleotide sequence ID" value="NM_001292046.1"/>
</dbReference>
<dbReference type="RefSeq" id="NP_006672.1">
    <property type="nucleotide sequence ID" value="NM_006681.4"/>
</dbReference>
<dbReference type="PDB" id="7W53">
    <property type="method" value="EM"/>
    <property type="resolution" value="3.20 A"/>
    <property type="chains" value="C=142-166"/>
</dbReference>
<dbReference type="PDB" id="7W55">
    <property type="method" value="EM"/>
    <property type="resolution" value="2.80 A"/>
    <property type="chains" value="C=142-166"/>
</dbReference>
<dbReference type="PDB" id="7XK8">
    <property type="method" value="EM"/>
    <property type="resolution" value="3.30 A"/>
    <property type="chains" value="P=142-166"/>
</dbReference>
<dbReference type="PDBsum" id="7W53"/>
<dbReference type="PDBsum" id="7W55"/>
<dbReference type="PDBsum" id="7XK8"/>
<dbReference type="EMDB" id="EMD-32313"/>
<dbReference type="EMDB" id="EMD-32314"/>
<dbReference type="EMDB" id="EMD-33247"/>
<dbReference type="SMR" id="P48645"/>
<dbReference type="BioGRID" id="116082">
    <property type="interactions" value="121"/>
</dbReference>
<dbReference type="FunCoup" id="P48645">
    <property type="interactions" value="372"/>
</dbReference>
<dbReference type="IntAct" id="P48645">
    <property type="interactions" value="84"/>
</dbReference>
<dbReference type="STRING" id="9606.ENSP00000264218"/>
<dbReference type="GlyGen" id="P48645">
    <property type="glycosylation" value="2 sites, 1 O-linked glycan (2 sites)"/>
</dbReference>
<dbReference type="iPTMnet" id="P48645"/>
<dbReference type="PhosphoSitePlus" id="P48645"/>
<dbReference type="BioMuta" id="NMU"/>
<dbReference type="DMDM" id="1346685"/>
<dbReference type="MassIVE" id="P48645"/>
<dbReference type="PaxDb" id="9606-ENSP00000264218"/>
<dbReference type="PeptideAtlas" id="P48645"/>
<dbReference type="ProteomicsDB" id="55919"/>
<dbReference type="Pumba" id="P48645"/>
<dbReference type="Antibodypedia" id="12370">
    <property type="antibodies" value="165 antibodies from 27 providers"/>
</dbReference>
<dbReference type="DNASU" id="10874"/>
<dbReference type="Ensembl" id="ENST00000264218.7">
    <property type="protein sequence ID" value="ENSP00000264218.3"/>
    <property type="gene ID" value="ENSG00000109255.11"/>
</dbReference>
<dbReference type="GeneID" id="10874"/>
<dbReference type="KEGG" id="hsa:10874"/>
<dbReference type="MANE-Select" id="ENST00000264218.7">
    <property type="protein sequence ID" value="ENSP00000264218.3"/>
    <property type="RefSeq nucleotide sequence ID" value="NM_006681.4"/>
    <property type="RefSeq protein sequence ID" value="NP_006672.1"/>
</dbReference>
<dbReference type="UCSC" id="uc003hbc.3">
    <property type="organism name" value="human"/>
</dbReference>
<dbReference type="AGR" id="HGNC:7859"/>
<dbReference type="CTD" id="10874"/>
<dbReference type="DisGeNET" id="10874"/>
<dbReference type="GeneCards" id="NMU"/>
<dbReference type="HGNC" id="HGNC:7859">
    <property type="gene designation" value="NMU"/>
</dbReference>
<dbReference type="HPA" id="ENSG00000109255">
    <property type="expression patterns" value="Tissue enhanced (esophagus, skin, vagina)"/>
</dbReference>
<dbReference type="MIM" id="605103">
    <property type="type" value="gene"/>
</dbReference>
<dbReference type="neXtProt" id="NX_P48645"/>
<dbReference type="OpenTargets" id="ENSG00000109255"/>
<dbReference type="PharmGKB" id="PA31663"/>
<dbReference type="VEuPathDB" id="HostDB:ENSG00000109255"/>
<dbReference type="eggNOG" id="ENOG502S36R">
    <property type="taxonomic scope" value="Eukaryota"/>
</dbReference>
<dbReference type="GeneTree" id="ENSGT00510000048726"/>
<dbReference type="HOGENOM" id="CLU_090356_0_0_1"/>
<dbReference type="InParanoid" id="P48645"/>
<dbReference type="OMA" id="LWSEQEL"/>
<dbReference type="OrthoDB" id="9879773at2759"/>
<dbReference type="PAN-GO" id="P48645">
    <property type="GO annotations" value="5 GO annotations based on evolutionary models"/>
</dbReference>
<dbReference type="PhylomeDB" id="P48645"/>
<dbReference type="TreeFam" id="TF338319"/>
<dbReference type="PathwayCommons" id="P48645"/>
<dbReference type="Reactome" id="R-HSA-375276">
    <property type="pathway name" value="Peptide ligand-binding receptors"/>
</dbReference>
<dbReference type="Reactome" id="R-HSA-416476">
    <property type="pathway name" value="G alpha (q) signalling events"/>
</dbReference>
<dbReference type="Reactome" id="R-HSA-418594">
    <property type="pathway name" value="G alpha (i) signalling events"/>
</dbReference>
<dbReference type="SignaLink" id="P48645"/>
<dbReference type="BioGRID-ORCS" id="10874">
    <property type="hits" value="9 hits in 1155 CRISPR screens"/>
</dbReference>
<dbReference type="ChiTaRS" id="NMU">
    <property type="organism name" value="human"/>
</dbReference>
<dbReference type="GenomeRNAi" id="10874"/>
<dbReference type="Pharos" id="P48645">
    <property type="development level" value="Tbio"/>
</dbReference>
<dbReference type="PRO" id="PR:P48645"/>
<dbReference type="Proteomes" id="UP000005640">
    <property type="component" value="Chromosome 4"/>
</dbReference>
<dbReference type="RNAct" id="P48645">
    <property type="molecule type" value="protein"/>
</dbReference>
<dbReference type="Bgee" id="ENSG00000109255">
    <property type="expression patterns" value="Expressed in tongue squamous epithelium and 141 other cell types or tissues"/>
</dbReference>
<dbReference type="ExpressionAtlas" id="P48645">
    <property type="expression patterns" value="baseline and differential"/>
</dbReference>
<dbReference type="GO" id="GO:0005576">
    <property type="term" value="C:extracellular region"/>
    <property type="evidence" value="ECO:0000304"/>
    <property type="project" value="Reactome"/>
</dbReference>
<dbReference type="GO" id="GO:0043195">
    <property type="term" value="C:terminal bouton"/>
    <property type="evidence" value="ECO:0000318"/>
    <property type="project" value="GO_Central"/>
</dbReference>
<dbReference type="GO" id="GO:0042922">
    <property type="term" value="F:neuromedin U receptor binding"/>
    <property type="evidence" value="ECO:0000318"/>
    <property type="project" value="GO_Central"/>
</dbReference>
<dbReference type="GO" id="GO:0005102">
    <property type="term" value="F:signaling receptor binding"/>
    <property type="evidence" value="ECO:0000304"/>
    <property type="project" value="ProtInc"/>
</dbReference>
<dbReference type="GO" id="GO:0031839">
    <property type="term" value="F:type 1 neuromedin U receptor binding"/>
    <property type="evidence" value="ECO:0000314"/>
    <property type="project" value="UniProtKB"/>
</dbReference>
<dbReference type="GO" id="GO:0031840">
    <property type="term" value="F:type 2 neuromedin U receptor binding"/>
    <property type="evidence" value="ECO:0000314"/>
    <property type="project" value="UniProtKB"/>
</dbReference>
<dbReference type="GO" id="GO:0042755">
    <property type="term" value="P:eating behavior"/>
    <property type="evidence" value="ECO:0007669"/>
    <property type="project" value="Ensembl"/>
</dbReference>
<dbReference type="GO" id="GO:0097009">
    <property type="term" value="P:energy homeostasis"/>
    <property type="evidence" value="ECO:0007669"/>
    <property type="project" value="Ensembl"/>
</dbReference>
<dbReference type="GO" id="GO:0007186">
    <property type="term" value="P:G protein-coupled receptor signaling pathway"/>
    <property type="evidence" value="ECO:0000304"/>
    <property type="project" value="ProtInc"/>
</dbReference>
<dbReference type="GO" id="GO:0001696">
    <property type="term" value="P:gastric acid secretion"/>
    <property type="evidence" value="ECO:0007669"/>
    <property type="project" value="Ensembl"/>
</dbReference>
<dbReference type="GO" id="GO:1903999">
    <property type="term" value="P:negative regulation of eating behavior"/>
    <property type="evidence" value="ECO:0007669"/>
    <property type="project" value="Ensembl"/>
</dbReference>
<dbReference type="GO" id="GO:0060455">
    <property type="term" value="P:negative regulation of gastric acid secretion"/>
    <property type="evidence" value="ECO:0007669"/>
    <property type="project" value="Ensembl"/>
</dbReference>
<dbReference type="GO" id="GO:0120061">
    <property type="term" value="P:negative regulation of gastric emptying"/>
    <property type="evidence" value="ECO:0007669"/>
    <property type="project" value="Ensembl"/>
</dbReference>
<dbReference type="GO" id="GO:0007218">
    <property type="term" value="P:neuropeptide signaling pathway"/>
    <property type="evidence" value="ECO:0000314"/>
    <property type="project" value="UniProtKB"/>
</dbReference>
<dbReference type="GO" id="GO:0009648">
    <property type="term" value="P:photoperiodism"/>
    <property type="evidence" value="ECO:0007669"/>
    <property type="project" value="Ensembl"/>
</dbReference>
<dbReference type="GO" id="GO:0007204">
    <property type="term" value="P:positive regulation of cytosolic calcium ion concentration"/>
    <property type="evidence" value="ECO:0007669"/>
    <property type="project" value="Ensembl"/>
</dbReference>
<dbReference type="GO" id="GO:0010460">
    <property type="term" value="P:positive regulation of heart rate"/>
    <property type="evidence" value="ECO:0007669"/>
    <property type="project" value="Ensembl"/>
</dbReference>
<dbReference type="GO" id="GO:0031652">
    <property type="term" value="P:positive regulation of heat generation"/>
    <property type="evidence" value="ECO:0007669"/>
    <property type="project" value="Ensembl"/>
</dbReference>
<dbReference type="GO" id="GO:1902722">
    <property type="term" value="P:positive regulation of prolactin secretion"/>
    <property type="evidence" value="ECO:0007669"/>
    <property type="project" value="Ensembl"/>
</dbReference>
<dbReference type="GO" id="GO:1904058">
    <property type="term" value="P:positive regulation of sensory perception of pain"/>
    <property type="evidence" value="ECO:0007669"/>
    <property type="project" value="Ensembl"/>
</dbReference>
<dbReference type="GO" id="GO:0045987">
    <property type="term" value="P:positive regulation of smooth muscle contraction"/>
    <property type="evidence" value="ECO:0000318"/>
    <property type="project" value="GO_Central"/>
</dbReference>
<dbReference type="GO" id="GO:0120069">
    <property type="term" value="P:positive regulation of stomach fundus smooth muscle contraction"/>
    <property type="evidence" value="ECO:0007669"/>
    <property type="project" value="Ensembl"/>
</dbReference>
<dbReference type="GO" id="GO:0050806">
    <property type="term" value="P:positive regulation of synaptic transmission"/>
    <property type="evidence" value="ECO:0000318"/>
    <property type="project" value="GO_Central"/>
</dbReference>
<dbReference type="GO" id="GO:0003084">
    <property type="term" value="P:positive regulation of systemic arterial blood pressure"/>
    <property type="evidence" value="ECO:0007669"/>
    <property type="project" value="Ensembl"/>
</dbReference>
<dbReference type="GO" id="GO:0045187">
    <property type="term" value="P:regulation of circadian sleep/wake cycle, sleep"/>
    <property type="evidence" value="ECO:0007669"/>
    <property type="project" value="Ensembl"/>
</dbReference>
<dbReference type="GO" id="GO:2000821">
    <property type="term" value="P:regulation of grooming behavior"/>
    <property type="evidence" value="ECO:0007669"/>
    <property type="project" value="Ensembl"/>
</dbReference>
<dbReference type="GO" id="GO:0001659">
    <property type="term" value="P:temperature homeostasis"/>
    <property type="evidence" value="ECO:0007669"/>
    <property type="project" value="Ensembl"/>
</dbReference>
<dbReference type="InterPro" id="IPR018070">
    <property type="entry name" value="Neuromedin-U_amidation-site"/>
</dbReference>
<dbReference type="InterPro" id="IPR042384">
    <property type="entry name" value="NMU"/>
</dbReference>
<dbReference type="InterPro" id="IPR008200">
    <property type="entry name" value="NMU_C"/>
</dbReference>
<dbReference type="PANTHER" id="PTHR15390">
    <property type="entry name" value="NEUROMEDIN-U"/>
    <property type="match status" value="1"/>
</dbReference>
<dbReference type="PANTHER" id="PTHR15390:SF0">
    <property type="entry name" value="NEUROMEDIN-U"/>
    <property type="match status" value="1"/>
</dbReference>
<dbReference type="Pfam" id="PF02070">
    <property type="entry name" value="NMU"/>
    <property type="match status" value="1"/>
</dbReference>
<dbReference type="SMART" id="SM00084">
    <property type="entry name" value="NMU"/>
    <property type="match status" value="1"/>
</dbReference>
<dbReference type="PROSITE" id="PS00967">
    <property type="entry name" value="NMU"/>
    <property type="match status" value="1"/>
</dbReference>
<comment type="function">
    <molecule>Neuromedin-U-25</molecule>
    <text evidence="2">Ligand for receptors NMUR1 and NMUR2 (By similarity). Stimulates muscle contractions of specific regions of the gastrointestinal tract. In humans, NmU stimulates contractions of the ileum and urinary bladder.</text>
</comment>
<comment type="function">
    <molecule>Neuromedin precursor-related peptide 33</molecule>
    <text evidence="2">Does not function as a ligand for either NMUR1 or NMUR2. Indirectly induces prolactin release although its potency is much lower than that of neuromedin precursor-related peptide 36.</text>
</comment>
<comment type="function">
    <molecule>Neuromedin precursor-related peptide 36</molecule>
    <text evidence="2">Does not function as a ligand for either NMUR1 or NMUR2. Indirectly induces prolactin release from lactotroph cells in the pituitary gland, probably via the hypothalamic dopaminergic system.</text>
</comment>
<comment type="interaction">
    <interactant intactId="EBI-10210351">
        <id>P48645</id>
    </interactant>
    <interactant intactId="EBI-11954292">
        <id>Q86V38</id>
        <label>ATN1</label>
    </interactant>
    <organismsDiffer>false</organismsDiffer>
    <experiments>3</experiments>
</comment>
<comment type="interaction">
    <interactant intactId="EBI-10210351">
        <id>P48645</id>
    </interactant>
    <interactant intactId="EBI-3867333">
        <id>A8MQ03</id>
        <label>CYSRT1</label>
    </interactant>
    <organismsDiffer>false</organismsDiffer>
    <experiments>3</experiments>
</comment>
<comment type="interaction">
    <interactant intactId="EBI-10210351">
        <id>P48645</id>
    </interactant>
    <interactant intactId="EBI-10303987">
        <id>Q9UHG0</id>
        <label>DCDC2</label>
    </interactant>
    <organismsDiffer>false</organismsDiffer>
    <experiments>3</experiments>
</comment>
<comment type="interaction">
    <interactant intactId="EBI-10210351">
        <id>P48645</id>
    </interactant>
    <interactant intactId="EBI-2432309">
        <id>Q92876</id>
        <label>KLK6</label>
    </interactant>
    <organismsDiffer>false</organismsDiffer>
    <experiments>3</experiments>
</comment>
<comment type="interaction">
    <interactant intactId="EBI-10210351">
        <id>P48645</id>
    </interactant>
    <interactant intactId="EBI-1047093">
        <id>O76011</id>
        <label>KRT34</label>
    </interactant>
    <organismsDiffer>false</organismsDiffer>
    <experiments>3</experiments>
</comment>
<comment type="interaction">
    <interactant intactId="EBI-10210351">
        <id>P48645</id>
    </interactant>
    <interactant intactId="EBI-11959885">
        <id>Q07627</id>
        <label>KRTAP1-1</label>
    </interactant>
    <organismsDiffer>false</organismsDiffer>
    <experiments>3</experiments>
</comment>
<comment type="interaction">
    <interactant intactId="EBI-10210351">
        <id>P48645</id>
    </interactant>
    <interactant intactId="EBI-11749135">
        <id>Q8IUG1</id>
        <label>KRTAP1-3</label>
    </interactant>
    <organismsDiffer>false</organismsDiffer>
    <experiments>3</experiments>
</comment>
<comment type="interaction">
    <interactant intactId="EBI-10210351">
        <id>P48645</id>
    </interactant>
    <interactant intactId="EBI-11741292">
        <id>Q9BYS1</id>
        <label>KRTAP1-5</label>
    </interactant>
    <organismsDiffer>false</organismsDiffer>
    <experiments>3</experiments>
</comment>
<comment type="interaction">
    <interactant intactId="EBI-10210351">
        <id>P48645</id>
    </interactant>
    <interactant intactId="EBI-12012928">
        <id>P60371</id>
        <label>KRTAP10-6</label>
    </interactant>
    <organismsDiffer>false</organismsDiffer>
    <experiments>3</experiments>
</comment>
<comment type="interaction">
    <interactant intactId="EBI-10210351">
        <id>P48645</id>
    </interactant>
    <interactant intactId="EBI-11953334">
        <id>P60328</id>
        <label>KRTAP12-3</label>
    </interactant>
    <organismsDiffer>false</organismsDiffer>
    <experiments>3</experiments>
</comment>
<comment type="interaction">
    <interactant intactId="EBI-10210351">
        <id>P48645</id>
    </interactant>
    <interactant intactId="EBI-11988175">
        <id>Q9BYP8</id>
        <label>KRTAP17-1</label>
    </interactant>
    <organismsDiffer>false</organismsDiffer>
    <experiments>5</experiments>
</comment>
<comment type="interaction">
    <interactant intactId="EBI-10210351">
        <id>P48645</id>
    </interactant>
    <interactant intactId="EBI-3958099">
        <id>P26371</id>
        <label>KRTAP5-9</label>
    </interactant>
    <organismsDiffer>false</organismsDiffer>
    <experiments>6</experiments>
</comment>
<comment type="interaction">
    <interactant intactId="EBI-10210351">
        <id>P48645</id>
    </interactant>
    <interactant intactId="EBI-945833">
        <id>Q7Z3S9</id>
        <label>NOTCH2NLA</label>
    </interactant>
    <organismsDiffer>false</organismsDiffer>
    <experiments>3</experiments>
</comment>
<comment type="interaction">
    <interactant intactId="EBI-10210351">
        <id>P48645</id>
    </interactant>
    <interactant intactId="EBI-22310682">
        <id>P0DPK4</id>
        <label>NOTCH2NLC</label>
    </interactant>
    <organismsDiffer>false</organismsDiffer>
    <experiments>3</experiments>
</comment>
<comment type="interaction">
    <interactant intactId="EBI-10210351">
        <id>P48645</id>
    </interactant>
    <interactant intactId="EBI-6655935">
        <id>P23219</id>
        <label>PTGS1</label>
    </interactant>
    <organismsDiffer>false</organismsDiffer>
    <experiments>3</experiments>
</comment>
<comment type="subcellular location">
    <subcellularLocation>
        <location>Secreted</location>
    </subcellularLocation>
</comment>
<comment type="tissue specificity">
    <text>Expressed throughout the enteric nervous system with highest levels being found in the jejunum.</text>
</comment>
<comment type="similarity">
    <text evidence="4">Belongs to the NmU family.</text>
</comment>
<name>NMU_HUMAN</name>
<protein>
    <recommendedName>
        <fullName>Neuromedin-U</fullName>
    </recommendedName>
    <component>
        <recommendedName>
            <fullName evidence="2">Neuromedin precursor-related peptide 36</fullName>
            <shortName evidence="2">NURP36</shortName>
        </recommendedName>
    </component>
    <component>
        <recommendedName>
            <fullName evidence="2">Neuromedin precursor-related peptide 33</fullName>
            <shortName evidence="2">NURP33</shortName>
        </recommendedName>
    </component>
    <component>
        <recommendedName>
            <fullName>Neuromedin-U-25</fullName>
            <shortName>NmU-25</shortName>
        </recommendedName>
    </component>
</protein>
<feature type="signal peptide" evidence="3">
    <location>
        <begin position="1"/>
        <end position="34"/>
    </location>
</feature>
<feature type="propeptide" id="PRO_0000019772">
    <location>
        <begin position="35"/>
        <end position="103"/>
    </location>
</feature>
<feature type="peptide" id="PRO_0000445765" description="Neuromedin precursor-related peptide 36" evidence="2">
    <location>
        <begin position="104"/>
        <end position="139"/>
    </location>
</feature>
<feature type="peptide" id="PRO_0000445766" description="Neuromedin precursor-related peptide 33" evidence="2">
    <location>
        <begin position="104"/>
        <end position="136"/>
    </location>
</feature>
<feature type="peptide" id="PRO_0000019773" description="Neuromedin-U-25">
    <location>
        <begin position="142"/>
        <end position="166"/>
    </location>
</feature>
<feature type="propeptide" id="PRO_0000019774">
    <location>
        <begin position="170"/>
        <end position="174"/>
    </location>
</feature>
<feature type="modified residue" description="Methionine sulfoxide; partial" evidence="2">
    <location>
        <position position="139"/>
    </location>
</feature>
<feature type="modified residue" description="Asparagine amide" evidence="1">
    <location>
        <position position="166"/>
    </location>
</feature>
<feature type="sequence variant" id="VAR_053538" description="In dbSNP:rs35892915.">
    <original>E</original>
    <variation>G</variation>
    <location>
        <position position="79"/>
    </location>
</feature>
<feature type="sequence variant" id="VAR_053539" description="In dbSNP:rs12108463.">
    <original>F</original>
    <variation>L</variation>
    <location>
        <position position="148"/>
    </location>
</feature>
<feature type="strand" evidence="5">
    <location>
        <begin position="153"/>
        <end position="156"/>
    </location>
</feature>
<gene>
    <name type="primary">NMU</name>
</gene>
<accession>P48645</accession>
<proteinExistence type="evidence at protein level"/>